<proteinExistence type="inferred from homology"/>
<dbReference type="EMBL" id="CP000656">
    <property type="protein sequence ID" value="ABP46508.1"/>
    <property type="molecule type" value="Genomic_DNA"/>
</dbReference>
<dbReference type="SMR" id="A4TCF7"/>
<dbReference type="STRING" id="350054.Mflv_4038"/>
<dbReference type="KEGG" id="mgi:Mflv_4038"/>
<dbReference type="eggNOG" id="COG0858">
    <property type="taxonomic scope" value="Bacteria"/>
</dbReference>
<dbReference type="HOGENOM" id="CLU_089475_0_0_11"/>
<dbReference type="OrthoDB" id="307788at2"/>
<dbReference type="GO" id="GO:0005829">
    <property type="term" value="C:cytosol"/>
    <property type="evidence" value="ECO:0007669"/>
    <property type="project" value="TreeGrafter"/>
</dbReference>
<dbReference type="GO" id="GO:0043024">
    <property type="term" value="F:ribosomal small subunit binding"/>
    <property type="evidence" value="ECO:0007669"/>
    <property type="project" value="TreeGrafter"/>
</dbReference>
<dbReference type="GO" id="GO:0030490">
    <property type="term" value="P:maturation of SSU-rRNA"/>
    <property type="evidence" value="ECO:0007669"/>
    <property type="project" value="UniProtKB-UniRule"/>
</dbReference>
<dbReference type="Gene3D" id="3.30.300.20">
    <property type="match status" value="1"/>
</dbReference>
<dbReference type="HAMAP" id="MF_00003">
    <property type="entry name" value="RbfA"/>
    <property type="match status" value="1"/>
</dbReference>
<dbReference type="InterPro" id="IPR015946">
    <property type="entry name" value="KH_dom-like_a/b"/>
</dbReference>
<dbReference type="InterPro" id="IPR000238">
    <property type="entry name" value="RbfA"/>
</dbReference>
<dbReference type="InterPro" id="IPR023799">
    <property type="entry name" value="RbfA_dom_sf"/>
</dbReference>
<dbReference type="InterPro" id="IPR020053">
    <property type="entry name" value="Ribosome-bd_factorA_CS"/>
</dbReference>
<dbReference type="NCBIfam" id="TIGR00082">
    <property type="entry name" value="rbfA"/>
    <property type="match status" value="1"/>
</dbReference>
<dbReference type="PANTHER" id="PTHR33515">
    <property type="entry name" value="RIBOSOME-BINDING FACTOR A, CHLOROPLASTIC-RELATED"/>
    <property type="match status" value="1"/>
</dbReference>
<dbReference type="PANTHER" id="PTHR33515:SF1">
    <property type="entry name" value="RIBOSOME-BINDING FACTOR A, CHLOROPLASTIC-RELATED"/>
    <property type="match status" value="1"/>
</dbReference>
<dbReference type="Pfam" id="PF02033">
    <property type="entry name" value="RBFA"/>
    <property type="match status" value="1"/>
</dbReference>
<dbReference type="SUPFAM" id="SSF89919">
    <property type="entry name" value="Ribosome-binding factor A, RbfA"/>
    <property type="match status" value="1"/>
</dbReference>
<dbReference type="PROSITE" id="PS01319">
    <property type="entry name" value="RBFA"/>
    <property type="match status" value="1"/>
</dbReference>
<comment type="function">
    <text evidence="1">One of several proteins that assist in the late maturation steps of the functional core of the 30S ribosomal subunit. Associates with free 30S ribosomal subunits (but not with 30S subunits that are part of 70S ribosomes or polysomes). Required for efficient processing of 16S rRNA. May interact with the 5'-terminal helix region of 16S rRNA.</text>
</comment>
<comment type="subunit">
    <text evidence="1">Monomer. Binds 30S ribosomal subunits, but not 50S ribosomal subunits or 70S ribosomes.</text>
</comment>
<comment type="subcellular location">
    <subcellularLocation>
        <location evidence="1">Cytoplasm</location>
    </subcellularLocation>
</comment>
<comment type="similarity">
    <text evidence="1">Belongs to the RbfA family.</text>
</comment>
<feature type="chain" id="PRO_1000073769" description="Ribosome-binding factor A">
    <location>
        <begin position="1"/>
        <end position="168"/>
    </location>
</feature>
<feature type="region of interest" description="Disordered" evidence="2">
    <location>
        <begin position="125"/>
        <end position="168"/>
    </location>
</feature>
<feature type="compositionally biased region" description="Basic and acidic residues" evidence="2">
    <location>
        <begin position="125"/>
        <end position="138"/>
    </location>
</feature>
<protein>
    <recommendedName>
        <fullName evidence="1">Ribosome-binding factor A</fullName>
    </recommendedName>
</protein>
<keyword id="KW-0963">Cytoplasm</keyword>
<keyword id="KW-0690">Ribosome biogenesis</keyword>
<name>RBFA_MYCGI</name>
<sequence length="168" mass="17837">MPDPARAKRLAKRISTIVASAIEYEIKDPRLAGVTITDAKVTNDLHDATLYYTVLGRSLDEEPDYEGAAAGLEKAKGVLRTKVGASLGVRFTPTLAFARDTVPDAAHRMEALLAQARAADEDLARVREGAKHAGDSDPYRVLGEGDLEGPATGGPDVEDEGGANSHDR</sequence>
<evidence type="ECO:0000255" key="1">
    <source>
        <dbReference type="HAMAP-Rule" id="MF_00003"/>
    </source>
</evidence>
<evidence type="ECO:0000256" key="2">
    <source>
        <dbReference type="SAM" id="MobiDB-lite"/>
    </source>
</evidence>
<reference key="1">
    <citation type="submission" date="2007-04" db="EMBL/GenBank/DDBJ databases">
        <title>Complete sequence of chromosome of Mycobacterium gilvum PYR-GCK.</title>
        <authorList>
            <consortium name="US DOE Joint Genome Institute"/>
            <person name="Copeland A."/>
            <person name="Lucas S."/>
            <person name="Lapidus A."/>
            <person name="Barry K."/>
            <person name="Detter J.C."/>
            <person name="Glavina del Rio T."/>
            <person name="Hammon N."/>
            <person name="Israni S."/>
            <person name="Dalin E."/>
            <person name="Tice H."/>
            <person name="Pitluck S."/>
            <person name="Chain P."/>
            <person name="Malfatti S."/>
            <person name="Shin M."/>
            <person name="Vergez L."/>
            <person name="Schmutz J."/>
            <person name="Larimer F."/>
            <person name="Land M."/>
            <person name="Hauser L."/>
            <person name="Kyrpides N."/>
            <person name="Mikhailova N."/>
            <person name="Miller C."/>
            <person name="Richardson P."/>
        </authorList>
    </citation>
    <scope>NUCLEOTIDE SEQUENCE [LARGE SCALE GENOMIC DNA]</scope>
    <source>
        <strain>PYR-GCK</strain>
    </source>
</reference>
<gene>
    <name evidence="1" type="primary">rbfA</name>
    <name type="ordered locus">Mflv_4038</name>
</gene>
<accession>A4TCF7</accession>
<organism>
    <name type="scientific">Mycolicibacterium gilvum (strain PYR-GCK)</name>
    <name type="common">Mycobacterium gilvum (strain PYR-GCK)</name>
    <dbReference type="NCBI Taxonomy" id="350054"/>
    <lineage>
        <taxon>Bacteria</taxon>
        <taxon>Bacillati</taxon>
        <taxon>Actinomycetota</taxon>
        <taxon>Actinomycetes</taxon>
        <taxon>Mycobacteriales</taxon>
        <taxon>Mycobacteriaceae</taxon>
        <taxon>Mycolicibacterium</taxon>
    </lineage>
</organism>